<organism>
    <name type="scientific">Euglena gracilis</name>
    <dbReference type="NCBI Taxonomy" id="3039"/>
    <lineage>
        <taxon>Eukaryota</taxon>
        <taxon>Discoba</taxon>
        <taxon>Euglenozoa</taxon>
        <taxon>Euglenida</taxon>
        <taxon>Spirocuta</taxon>
        <taxon>Euglenophyceae</taxon>
        <taxon>Euglenales</taxon>
        <taxon>Euglenaceae</taxon>
        <taxon>Euglena</taxon>
    </lineage>
</organism>
<gene>
    <name evidence="6" type="primary">pacB</name>
</gene>
<evidence type="ECO:0000250" key="1">
    <source>
        <dbReference type="UniProtKB" id="Q8S9F1"/>
    </source>
</evidence>
<evidence type="ECO:0000255" key="2">
    <source>
        <dbReference type="PROSITE-ProRule" id="PRU00030"/>
    </source>
</evidence>
<evidence type="ECO:0000256" key="3">
    <source>
        <dbReference type="SAM" id="MobiDB-lite"/>
    </source>
</evidence>
<evidence type="ECO:0000269" key="4">
    <source>
    </source>
</evidence>
<evidence type="ECO:0000305" key="5"/>
<evidence type="ECO:0000312" key="6">
    <source>
        <dbReference type="EMBL" id="CAJ57397.1"/>
    </source>
</evidence>
<proteinExistence type="evidence at transcript level"/>
<sequence length="855" mass="93557">MYILVWKKGQQIKTFHTLDEAAQFKAASNFDEAPMFSVTVAPAISASGGSNEATNLRRLMYLSKGTNPEECNPQFVAELARVATIRNREIGLSGFLMSSSPFLFQAIEGTDQDLDFLFAKISADPRHERCIVLANRPCTGRMSGVWHMKDSHMDSITTHDAMMTILYQIARSFSSMLTYLPKRAGNMLLSGLDPAAQPPEPKSVVVTFIYLVAYGSLLSNPYSTEQPAEVLSTFVDVCVKNLEGSGGIITKFITGICMASWPFNRTEEALTAIQQISEDLAQLPSQQAPGSSPSLMYSQAGVHYGRAMLCNAGSGKSDFTLLGDWINTTSRIATLAKKLTSPVLFSFQVRCLLGDEMREEIEGAVMDQVKGRDKPVVEYQFPGPERDVEVVGQKIEQFTPGRFRCQMRVGQYEALPISQRPPIFDDTPKCNPRPRTPGCEGRQRSHTLVDPHIMMAKLPGPSVSATGDTTVPTLTYISHATRPMSRLDLSAIMGTATRINALQRITGTLLHGNGLFVQTQEGPKEAEINLLLRIRQDTRRSDVATDHMPQPQERVYPSEWTLTSGKEEILAIFPPLQDVLSRLAKSFTAQETYVPSRVVSYLTAGNNPRELMPVSCGVVMTDICSLTSLTENSCLSEVWMICNTFIDACPSAICQEGAEVIKLIGNCVTAYFPGNNADSAVASAQELFTFCREHRQAIVDVLDVRGCVSYGVALDNGQVVMAQCGSEGLTEYVVAGAVSARVMEVEAITRGTCPRWATPLWSADRLSPQLRDHGIVPTPQAIEGLPCYGIAGEEFELDVDSIKLGIKALHAARSGEKPLTEPEEAKLDFSPGRVRHGDSGRRSNSAQGKLSIQVR</sequence>
<protein>
    <recommendedName>
        <fullName>Photoactivated adenylate cyclase subunit beta-like protein 1224-5/9F</fullName>
    </recommendedName>
</protein>
<feature type="chain" id="PRO_0000195723" description="Photoactivated adenylate cyclase subunit beta-like protein 1224-5/9F">
    <location>
        <begin position="1"/>
        <end position="855"/>
    </location>
</feature>
<feature type="domain" description="BLUF 1" evidence="2">
    <location>
        <begin position="56"/>
        <end position="149"/>
    </location>
</feature>
<feature type="domain" description="BLUF 2" evidence="2">
    <location>
        <begin position="471"/>
        <end position="563"/>
    </location>
</feature>
<feature type="region of interest" description="Disordered" evidence="3">
    <location>
        <begin position="420"/>
        <end position="444"/>
    </location>
</feature>
<feature type="region of interest" description="Disordered" evidence="3">
    <location>
        <begin position="813"/>
        <end position="855"/>
    </location>
</feature>
<feature type="compositionally biased region" description="Basic and acidic residues" evidence="3">
    <location>
        <begin position="813"/>
        <end position="827"/>
    </location>
</feature>
<feature type="compositionally biased region" description="Polar residues" evidence="3">
    <location>
        <begin position="842"/>
        <end position="855"/>
    </location>
</feature>
<keyword id="KW-0966">Cell projection</keyword>
<keyword id="KW-0969">Cilium</keyword>
<keyword id="KW-0282">Flagellum</keyword>
<keyword id="KW-0677">Repeat</keyword>
<dbReference type="EMBL" id="AM181338">
    <property type="protein sequence ID" value="CAJ57397.1"/>
    <property type="molecule type" value="mRNA"/>
</dbReference>
<dbReference type="SMR" id="P84740"/>
<dbReference type="GO" id="GO:0031514">
    <property type="term" value="C:motile cilium"/>
    <property type="evidence" value="ECO:0000314"/>
    <property type="project" value="UniProtKB"/>
</dbReference>
<dbReference type="GO" id="GO:0009882">
    <property type="term" value="F:blue light photoreceptor activity"/>
    <property type="evidence" value="ECO:0007669"/>
    <property type="project" value="InterPro"/>
</dbReference>
<dbReference type="GO" id="GO:0071949">
    <property type="term" value="F:FAD binding"/>
    <property type="evidence" value="ECO:0007669"/>
    <property type="project" value="InterPro"/>
</dbReference>
<dbReference type="GO" id="GO:0009190">
    <property type="term" value="P:cyclic nucleotide biosynthetic process"/>
    <property type="evidence" value="ECO:0007669"/>
    <property type="project" value="InterPro"/>
</dbReference>
<dbReference type="CDD" id="cd07302">
    <property type="entry name" value="CHD"/>
    <property type="match status" value="1"/>
</dbReference>
<dbReference type="FunFam" id="3.30.70.100:FF:000061">
    <property type="entry name" value="Photoactivated adenylate cyclase subunit beta-like protein 1224-5/1F"/>
    <property type="match status" value="1"/>
</dbReference>
<dbReference type="FunFam" id="3.30.70.1230:FF:000156">
    <property type="entry name" value="Photoactivated adenylate cyclase subunit beta-like protein 1224-5/9F"/>
    <property type="match status" value="1"/>
</dbReference>
<dbReference type="FunFam" id="3.30.70.100:FF:000064">
    <property type="entry name" value="Photoactivated adenylate cyclase subunit beta-like protein ST"/>
    <property type="match status" value="1"/>
</dbReference>
<dbReference type="Gene3D" id="3.30.70.100">
    <property type="match status" value="2"/>
</dbReference>
<dbReference type="Gene3D" id="3.30.70.1230">
    <property type="entry name" value="Nucleotide cyclase"/>
    <property type="match status" value="2"/>
</dbReference>
<dbReference type="InterPro" id="IPR001054">
    <property type="entry name" value="A/G_cyclase"/>
</dbReference>
<dbReference type="InterPro" id="IPR036046">
    <property type="entry name" value="Acylphosphatase-like_dom_sf"/>
</dbReference>
<dbReference type="InterPro" id="IPR007024">
    <property type="entry name" value="BLUF_domain"/>
</dbReference>
<dbReference type="InterPro" id="IPR029787">
    <property type="entry name" value="Nucleotide_cyclase"/>
</dbReference>
<dbReference type="Pfam" id="PF04940">
    <property type="entry name" value="BLUF"/>
    <property type="match status" value="2"/>
</dbReference>
<dbReference type="SMART" id="SM01034">
    <property type="entry name" value="BLUF"/>
    <property type="match status" value="2"/>
</dbReference>
<dbReference type="SUPFAM" id="SSF54975">
    <property type="entry name" value="Acylphosphatase/BLUF domain-like"/>
    <property type="match status" value="2"/>
</dbReference>
<dbReference type="SUPFAM" id="SSF55073">
    <property type="entry name" value="Nucleotide cyclase"/>
    <property type="match status" value="2"/>
</dbReference>
<dbReference type="PROSITE" id="PS50925">
    <property type="entry name" value="BLUF"/>
    <property type="match status" value="2"/>
</dbReference>
<reference evidence="5 6" key="1">
    <citation type="journal article" date="2005" name="Photochem. Photobiol. Sci.">
        <title>Photoactivated adenylyl cyclase (PAC) genes in the flagellate Euglena gracilis mutant strains.</title>
        <authorList>
            <person name="Ntefidou M."/>
            <person name="Haeder D.-P."/>
        </authorList>
    </citation>
    <scope>NUCLEOTIDE SEQUENCE [MRNA]</scope>
    <scope>SUBCELLULAR LOCATION</scope>
    <source>
        <strain>SAG 1224-5/9F</strain>
    </source>
</reference>
<accession>P84740</accession>
<accession>Q2P9M7</accession>
<name>PBL9F_EUGGR</name>
<comment type="subunit">
    <text evidence="1">Heterotetramer of two alpha and two beta subunits.</text>
</comment>
<comment type="subcellular location">
    <subcellularLocation>
        <location evidence="4">Cell projection</location>
        <location evidence="4">Cilium</location>
        <location evidence="4">Flagellum</location>
    </subcellularLocation>
    <text>Paraxonemal body. And paraxonemal bodies (PABs).</text>
</comment>
<comment type="miscellaneous">
    <text evidence="4">The 1224-5/9F strain is deficient in phototaxis. It is not known if this is due to defective adenylate cyclase activity or defective BLUF domains in this protein.</text>
</comment>